<proteinExistence type="inferred from homology"/>
<accession>Q31BD6</accession>
<protein>
    <recommendedName>
        <fullName evidence="1">Protein Thf1</fullName>
    </recommendedName>
</protein>
<keyword id="KW-0175">Coiled coil</keyword>
<reference key="1">
    <citation type="journal article" date="2006" name="Science">
        <title>Genomic islands and the ecology and evolution of Prochlorococcus.</title>
        <authorList>
            <person name="Coleman M.L."/>
            <person name="Sullivan M.B."/>
            <person name="Martiny A.C."/>
            <person name="Steglich C."/>
            <person name="Barry K."/>
            <person name="Delong E.F."/>
            <person name="Chisholm S.W."/>
        </authorList>
    </citation>
    <scope>NUCLEOTIDE SEQUENCE [LARGE SCALE GENOMIC DNA]</scope>
    <source>
        <strain>MIT 9312</strain>
    </source>
</reference>
<organism>
    <name type="scientific">Prochlorococcus marinus (strain MIT 9312)</name>
    <dbReference type="NCBI Taxonomy" id="74546"/>
    <lineage>
        <taxon>Bacteria</taxon>
        <taxon>Bacillati</taxon>
        <taxon>Cyanobacteriota</taxon>
        <taxon>Cyanophyceae</taxon>
        <taxon>Synechococcales</taxon>
        <taxon>Prochlorococcaceae</taxon>
        <taxon>Prochlorococcus</taxon>
    </lineage>
</organism>
<evidence type="ECO:0000255" key="1">
    <source>
        <dbReference type="HAMAP-Rule" id="MF_01843"/>
    </source>
</evidence>
<evidence type="ECO:0000305" key="2"/>
<dbReference type="EMBL" id="CP000111">
    <property type="protein sequence ID" value="ABB49809.1"/>
    <property type="status" value="ALT_INIT"/>
    <property type="molecule type" value="Genomic_DNA"/>
</dbReference>
<dbReference type="SMR" id="Q31BD6"/>
<dbReference type="STRING" id="74546.PMT9312_0749"/>
<dbReference type="KEGG" id="pmi:PMT9312_0749"/>
<dbReference type="eggNOG" id="ENOG5033PEZ">
    <property type="taxonomic scope" value="Bacteria"/>
</dbReference>
<dbReference type="HOGENOM" id="CLU_079763_1_0_3"/>
<dbReference type="OrthoDB" id="463078at2"/>
<dbReference type="Proteomes" id="UP000002715">
    <property type="component" value="Chromosome"/>
</dbReference>
<dbReference type="GO" id="GO:0030096">
    <property type="term" value="C:plasma membrane-derived thylakoid photosystem II"/>
    <property type="evidence" value="ECO:0007669"/>
    <property type="project" value="TreeGrafter"/>
</dbReference>
<dbReference type="GO" id="GO:0010207">
    <property type="term" value="P:photosystem II assembly"/>
    <property type="evidence" value="ECO:0007669"/>
    <property type="project" value="InterPro"/>
</dbReference>
<dbReference type="HAMAP" id="MF_01843">
    <property type="entry name" value="Thf1"/>
    <property type="match status" value="1"/>
</dbReference>
<dbReference type="InterPro" id="IPR017499">
    <property type="entry name" value="Thf1"/>
</dbReference>
<dbReference type="NCBIfam" id="TIGR03060">
    <property type="entry name" value="PS_II_psb29"/>
    <property type="match status" value="1"/>
</dbReference>
<dbReference type="PANTHER" id="PTHR34793">
    <property type="entry name" value="PROTEIN THYLAKOID FORMATION 1, CHLOROPLASTIC"/>
    <property type="match status" value="1"/>
</dbReference>
<dbReference type="PANTHER" id="PTHR34793:SF1">
    <property type="entry name" value="PROTEIN THYLAKOID FORMATION 1, CHLOROPLASTIC"/>
    <property type="match status" value="1"/>
</dbReference>
<dbReference type="Pfam" id="PF11264">
    <property type="entry name" value="ThylakoidFormat"/>
    <property type="match status" value="1"/>
</dbReference>
<comment type="function">
    <text evidence="1">May be involved in photosynthetic membrane biogenesis.</text>
</comment>
<comment type="similarity">
    <text evidence="1">Belongs to the THF1 family.</text>
</comment>
<comment type="sequence caution" evidence="2">
    <conflict type="erroneous initiation">
        <sequence resource="EMBL-CDS" id="ABB49809"/>
    </conflict>
</comment>
<feature type="chain" id="PRO_0000235213" description="Protein Thf1">
    <location>
        <begin position="1"/>
        <end position="201"/>
    </location>
</feature>
<feature type="coiled-coil region" evidence="1">
    <location>
        <begin position="174"/>
        <end position="201"/>
    </location>
</feature>
<name>THF1_PROM9</name>
<sequence>MKAKLTVSDSKKLFHEEFPYVIPGLYKRIVDEILVELNLLNHQNEFKQDYLFCIGLTETFKELTKGYKPEKHLDLLFESLCISTNFEAKEIKEISKISQKEFSDKSSKDILKLLKEKSNSKLYPSRILNLGIYILISNSQDFKENNDIEKNKMISDIFEKLSLSRNKAEKDIGIYKSSISKMEQAKELIQEQRIKDKKKTL</sequence>
<gene>
    <name evidence="1" type="primary">thf1</name>
    <name type="ordered locus">PMT9312_0749</name>
</gene>